<keyword id="KW-1003">Cell membrane</keyword>
<keyword id="KW-0472">Membrane</keyword>
<keyword id="KW-0812">Transmembrane</keyword>
<keyword id="KW-1133">Transmembrane helix</keyword>
<proteinExistence type="inferred from homology"/>
<accession>Q848J1</accession>
<dbReference type="EMBL" id="AY216592">
    <property type="protein sequence ID" value="AAO60102.1"/>
    <property type="molecule type" value="Genomic_DNA"/>
</dbReference>
<dbReference type="SMR" id="Q848J1"/>
<dbReference type="GO" id="GO:0005886">
    <property type="term" value="C:plasma membrane"/>
    <property type="evidence" value="ECO:0007669"/>
    <property type="project" value="UniProtKB-SubCell"/>
</dbReference>
<organism>
    <name type="scientific">Desulfitobacterium hafniense</name>
    <name type="common">Desulfitobacterium frappieri</name>
    <dbReference type="NCBI Taxonomy" id="49338"/>
    <lineage>
        <taxon>Bacteria</taxon>
        <taxon>Bacillati</taxon>
        <taxon>Bacillota</taxon>
        <taxon>Clostridia</taxon>
        <taxon>Eubacteriales</taxon>
        <taxon>Desulfitobacteriaceae</taxon>
        <taxon>Desulfitobacterium</taxon>
    </lineage>
</organism>
<name>PCEB_DESHA</name>
<reference key="1">
    <citation type="submission" date="2003-01" db="EMBL/GenBank/DDBJ databases">
        <title>Tetrachloroethene reductive dehalogenase operon from Desulfitobacterium strain PCE-S.</title>
        <authorList>
            <person name="Neumann A."/>
            <person name="Reinhardt S."/>
            <person name="Diekert G."/>
        </authorList>
    </citation>
    <scope>NUCLEOTIDE SEQUENCE [GENOMIC DNA]</scope>
    <source>
        <strain>PCE-S</strain>
    </source>
</reference>
<comment type="function">
    <text evidence="1">May act as a membrane anchor for the tetrachloroethene reductive dehalogenase PceA.</text>
</comment>
<comment type="subcellular location">
    <subcellularLocation>
        <location evidence="4">Cell membrane</location>
        <topology evidence="2">Multi-pass membrane protein</topology>
    </subcellularLocation>
</comment>
<comment type="similarity">
    <text evidence="4">Belongs to the PceB family.</text>
</comment>
<feature type="chain" id="PRO_0000453975" description="Probable tetrachloroethene reductive dehalogenase membrane anchor protein">
    <location>
        <begin position="1"/>
        <end position="105"/>
    </location>
</feature>
<feature type="transmembrane region" description="Helical" evidence="2">
    <location>
        <begin position="3"/>
        <end position="23"/>
    </location>
</feature>
<feature type="transmembrane region" description="Helical" evidence="2">
    <location>
        <begin position="35"/>
        <end position="55"/>
    </location>
</feature>
<feature type="transmembrane region" description="Helical" evidence="2">
    <location>
        <begin position="66"/>
        <end position="86"/>
    </location>
</feature>
<gene>
    <name evidence="3" type="primary">pceB</name>
</gene>
<evidence type="ECO:0000250" key="1">
    <source>
        <dbReference type="UniProtKB" id="Q8GJ30"/>
    </source>
</evidence>
<evidence type="ECO:0000255" key="2"/>
<evidence type="ECO:0000303" key="3">
    <source ref="1"/>
</evidence>
<evidence type="ECO:0000305" key="4"/>
<protein>
    <recommendedName>
        <fullName evidence="4">Probable tetrachloroethene reductive dehalogenase membrane anchor protein</fullName>
    </recommendedName>
</protein>
<sequence>MNIYDVLIWMALGMIALLIQYGIWRYLKGKGKDPIPLQICGFLANFFFIFALAWGYSSFSEREYQAIGMGFIFFGGTALIPAIITYRLANHPAKKIRESSDSISA</sequence>